<comment type="function">
    <text>The imp locus inhibits the extrachromosomal maintenance of the streptomyces plasmid SLP1. May function as a transcriptional activator.</text>
</comment>
<comment type="similarity">
    <text evidence="1">To E.coli YdcF.</text>
</comment>
<comment type="sequence caution" evidence="1">
    <conflict type="erroneous initiation">
        <sequence resource="EMBL-CDS" id="CAA33876"/>
    </conflict>
</comment>
<protein>
    <recommendedName>
        <fullName>Uncharacterized protein SCO4629</fullName>
    </recommendedName>
</protein>
<organism>
    <name type="scientific">Streptomyces coelicolor (strain ATCC BAA-471 / A3(2) / M145)</name>
    <dbReference type="NCBI Taxonomy" id="100226"/>
    <lineage>
        <taxon>Bacteria</taxon>
        <taxon>Bacillati</taxon>
        <taxon>Actinomycetota</taxon>
        <taxon>Actinomycetes</taxon>
        <taxon>Kitasatosporales</taxon>
        <taxon>Streptomycetaceae</taxon>
        <taxon>Streptomyces</taxon>
        <taxon>Streptomyces albidoflavus group</taxon>
    </lineage>
</organism>
<feature type="chain" id="PRO_0000205351" description="Uncharacterized protein SCO4629">
    <location>
        <begin position="1"/>
        <end position="221"/>
    </location>
</feature>
<feature type="DNA-binding region" description="H-T-H motif">
    <location>
        <begin position="77"/>
        <end position="96"/>
    </location>
</feature>
<keyword id="KW-0238">DNA-binding</keyword>
<keyword id="KW-1185">Reference proteome</keyword>
<gene>
    <name type="ordered locus">SCO4629</name>
    <name type="ORF">SCD39.29</name>
</gene>
<reference key="1">
    <citation type="journal article" date="1989" name="Mol. Gen. Genet.">
        <title>Identification and characterization of a locus inhibiting extrachromosomal maintenance of the Streptomyces plasmid SLP1.</title>
        <authorList>
            <person name="Grant S.R."/>
            <person name="Lee S.C."/>
            <person name="Kendall K."/>
            <person name="Cohen S.N."/>
        </authorList>
    </citation>
    <scope>NUCLEOTIDE SEQUENCE [GENOMIC DNA]</scope>
</reference>
<reference key="2">
    <citation type="journal article" date="2002" name="Nature">
        <title>Complete genome sequence of the model actinomycete Streptomyces coelicolor A3(2).</title>
        <authorList>
            <person name="Bentley S.D."/>
            <person name="Chater K.F."/>
            <person name="Cerdeno-Tarraga A.-M."/>
            <person name="Challis G.L."/>
            <person name="Thomson N.R."/>
            <person name="James K.D."/>
            <person name="Harris D.E."/>
            <person name="Quail M.A."/>
            <person name="Kieser H."/>
            <person name="Harper D."/>
            <person name="Bateman A."/>
            <person name="Brown S."/>
            <person name="Chandra G."/>
            <person name="Chen C.W."/>
            <person name="Collins M."/>
            <person name="Cronin A."/>
            <person name="Fraser A."/>
            <person name="Goble A."/>
            <person name="Hidalgo J."/>
            <person name="Hornsby T."/>
            <person name="Howarth S."/>
            <person name="Huang C.-H."/>
            <person name="Kieser T."/>
            <person name="Larke L."/>
            <person name="Murphy L.D."/>
            <person name="Oliver K."/>
            <person name="O'Neil S."/>
            <person name="Rabbinowitsch E."/>
            <person name="Rajandream M.A."/>
            <person name="Rutherford K.M."/>
            <person name="Rutter S."/>
            <person name="Seeger K."/>
            <person name="Saunders D."/>
            <person name="Sharp S."/>
            <person name="Squares R."/>
            <person name="Squares S."/>
            <person name="Taylor K."/>
            <person name="Warren T."/>
            <person name="Wietzorrek A."/>
            <person name="Woodward J.R."/>
            <person name="Barrell B.G."/>
            <person name="Parkhill J."/>
            <person name="Hopwood D.A."/>
        </authorList>
    </citation>
    <scope>NUCLEOTIDE SEQUENCE [LARGE SCALE GENOMIC DNA]</scope>
    <source>
        <strain>ATCC BAA-471 / A3(2) / M145</strain>
    </source>
</reference>
<accession>Q04310</accession>
<accession>Q9F2T3</accession>
<evidence type="ECO:0000305" key="1"/>
<dbReference type="EMBL" id="X15866">
    <property type="protein sequence ID" value="CAA33876.1"/>
    <property type="status" value="ALT_INIT"/>
    <property type="molecule type" value="Genomic_DNA"/>
</dbReference>
<dbReference type="EMBL" id="AL939120">
    <property type="protein sequence ID" value="CAC08282.1"/>
    <property type="molecule type" value="Genomic_DNA"/>
</dbReference>
<dbReference type="PIR" id="JQ0324">
    <property type="entry name" value="JQ0324"/>
</dbReference>
<dbReference type="RefSeq" id="NP_628791.1">
    <property type="nucleotide sequence ID" value="NC_003888.3"/>
</dbReference>
<dbReference type="RefSeq" id="WP_011029778.1">
    <property type="nucleotide sequence ID" value="NZ_VNID01000028.1"/>
</dbReference>
<dbReference type="SMR" id="Q04310"/>
<dbReference type="STRING" id="100226.gene:17762275"/>
<dbReference type="PaxDb" id="100226-SCO4629"/>
<dbReference type="KEGG" id="sco:SCO4629"/>
<dbReference type="PATRIC" id="fig|100226.15.peg.4702"/>
<dbReference type="eggNOG" id="COG1434">
    <property type="taxonomic scope" value="Bacteria"/>
</dbReference>
<dbReference type="HOGENOM" id="CLU_064561_0_0_11"/>
<dbReference type="InParanoid" id="Q04310"/>
<dbReference type="OrthoDB" id="2216870at2"/>
<dbReference type="PhylomeDB" id="Q04310"/>
<dbReference type="Proteomes" id="UP000001973">
    <property type="component" value="Chromosome"/>
</dbReference>
<dbReference type="GO" id="GO:0005886">
    <property type="term" value="C:plasma membrane"/>
    <property type="evidence" value="ECO:0000318"/>
    <property type="project" value="GO_Central"/>
</dbReference>
<dbReference type="GO" id="GO:0003677">
    <property type="term" value="F:DNA binding"/>
    <property type="evidence" value="ECO:0007669"/>
    <property type="project" value="UniProtKB-KW"/>
</dbReference>
<dbReference type="CDD" id="cd06259">
    <property type="entry name" value="YdcF-like"/>
    <property type="match status" value="1"/>
</dbReference>
<dbReference type="Gene3D" id="3.40.50.620">
    <property type="entry name" value="HUPs"/>
    <property type="match status" value="1"/>
</dbReference>
<dbReference type="InterPro" id="IPR051599">
    <property type="entry name" value="Cell_Envelope_Assoc"/>
</dbReference>
<dbReference type="InterPro" id="IPR003848">
    <property type="entry name" value="DUF218"/>
</dbReference>
<dbReference type="InterPro" id="IPR014729">
    <property type="entry name" value="Rossmann-like_a/b/a_fold"/>
</dbReference>
<dbReference type="PANTHER" id="PTHR30336:SF20">
    <property type="entry name" value="DUF218 DOMAIN-CONTAINING PROTEIN"/>
    <property type="match status" value="1"/>
</dbReference>
<dbReference type="PANTHER" id="PTHR30336">
    <property type="entry name" value="INNER MEMBRANE PROTEIN, PROBABLE PERMEASE"/>
    <property type="match status" value="1"/>
</dbReference>
<dbReference type="Pfam" id="PF02698">
    <property type="entry name" value="DUF218"/>
    <property type="match status" value="1"/>
</dbReference>
<sequence>MISAHVWADAQRLWDFQQMGHEPHPCSVAIGLGSHDLGVAETTAELYHRGMAPVIVFTGATSRTTHERMPRGEAEHYRERAVELGVPERAILVEPNARNTGENIRLSRALLEDLGMPVTSVLLVSKPYEERRAYATARKLWPNVEWVCVSTSMTLPDYVKSIGDARLVIDMLVGAQQRLMVYPRQGFMIKQEIPEPIMTAYEHLRGHGFTSRLVPETAEQT</sequence>
<name>Y4629_STRCO</name>
<proteinExistence type="predicted"/>